<sequence>MAEDDLCSLFFKLKVEDVTSSDELARHMKNASNERKPLIEPGENQSMDIDEEGGSVGHGLLYLYVDCPTMMLCFYGGSLPYNWMQGALLTNLPPYQHDVTLDEVNRGLRQASGFFGYADPMRSAYFAAFSFPGRVIKLNEQMELTSTKGKCLTFDLYASTQLRFEPGELVRHGECKFAIG</sequence>
<dbReference type="EC" id="3.2.1.-"/>
<dbReference type="EMBL" id="DQ838667">
    <property type="protein sequence ID" value="ABI54182.1"/>
    <property type="molecule type" value="Genomic_DNA"/>
</dbReference>
<dbReference type="EMBL" id="DQ852611">
    <property type="protein sequence ID" value="ABR18543.1"/>
    <property type="molecule type" value="Genomic_DNA"/>
</dbReference>
<dbReference type="EMBL" id="DQ852612">
    <property type="protein sequence ID" value="ABI54191.1"/>
    <property type="molecule type" value="Genomic_DNA"/>
</dbReference>
<dbReference type="SMR" id="C6EN00"/>
<dbReference type="GO" id="GO:0008422">
    <property type="term" value="F:beta-glucosidase activity"/>
    <property type="evidence" value="ECO:0007669"/>
    <property type="project" value="InterPro"/>
</dbReference>
<dbReference type="GO" id="GO:0005975">
    <property type="term" value="P:carbohydrate metabolic process"/>
    <property type="evidence" value="ECO:0007669"/>
    <property type="project" value="InterPro"/>
</dbReference>
<dbReference type="GO" id="GO:0009691">
    <property type="term" value="P:cytokinin biosynthetic process"/>
    <property type="evidence" value="ECO:0007669"/>
    <property type="project" value="UniProtKB-KW"/>
</dbReference>
<dbReference type="InterPro" id="IPR006065">
    <property type="entry name" value="Glyco_hydro_41"/>
</dbReference>
<dbReference type="PRINTS" id="PR00746">
    <property type="entry name" value="GLHYDRLASE41"/>
</dbReference>
<name>ROLC_CATRO</name>
<keyword id="KW-0203">Cytokinin biosynthesis</keyword>
<keyword id="KW-0326">Glycosidase</keyword>
<keyword id="KW-0378">Hydrolase</keyword>
<accession>C6EN00</accession>
<reference key="1">
    <citation type="submission" date="2006-06" db="EMBL/GenBank/DDBJ databases">
        <title>Putative cellular T-DNA of Catharanthus roseus var. Prabal showing sequence similarity to ORF12 of Agrobacterium rhizogenes A4.</title>
        <authorList>
            <person name="Sen J."/>
            <person name="Batra J."/>
            <person name="Jaggi M."/>
        </authorList>
    </citation>
    <scope>NUCLEOTIDE SEQUENCE [GENOMIC DNA]</scope>
    <source>
        <strain>cv. Prabal</strain>
    </source>
</reference>
<evidence type="ECO:0000250" key="1"/>
<comment type="function">
    <text evidence="1">Hydrolyzes cytokinin glucosides thus liberating free cytokinins.</text>
</comment>
<organism>
    <name type="scientific">Catharanthus roseus</name>
    <name type="common">Madagascar periwinkle</name>
    <name type="synonym">Vinca rosea</name>
    <dbReference type="NCBI Taxonomy" id="4058"/>
    <lineage>
        <taxon>Eukaryota</taxon>
        <taxon>Viridiplantae</taxon>
        <taxon>Streptophyta</taxon>
        <taxon>Embryophyta</taxon>
        <taxon>Tracheophyta</taxon>
        <taxon>Spermatophyta</taxon>
        <taxon>Magnoliopsida</taxon>
        <taxon>eudicotyledons</taxon>
        <taxon>Gunneridae</taxon>
        <taxon>Pentapetalae</taxon>
        <taxon>asterids</taxon>
        <taxon>lamiids</taxon>
        <taxon>Gentianales</taxon>
        <taxon>Apocynaceae</taxon>
        <taxon>Rauvolfioideae</taxon>
        <taxon>Vinceae</taxon>
        <taxon>Catharanthinae</taxon>
        <taxon>Catharanthus</taxon>
    </lineage>
</organism>
<feature type="chain" id="PRO_0000421062" description="Cytokinin-beta-glucosidase">
    <location>
        <begin position="1"/>
        <end position="180"/>
    </location>
</feature>
<protein>
    <recommendedName>
        <fullName>Cytokinin-beta-glucosidase</fullName>
        <ecNumber>3.2.1.-</ecNumber>
    </recommendedName>
    <alternativeName>
        <fullName>Protein ROL C</fullName>
    </alternativeName>
</protein>
<proteinExistence type="inferred from homology"/>
<gene>
    <name type="primary">ROLC</name>
    <name type="synonym">CrP12</name>
    <name type="synonym">CrT1</name>
    <name type="synonym">CrT2</name>
</gene>